<feature type="chain" id="PRO_0000440899" description="Protein CLEC16A homolog">
    <location>
        <begin position="1"/>
        <end position="1067"/>
    </location>
</feature>
<feature type="transmembrane region" description="Helical" evidence="1">
    <location>
        <begin position="333"/>
        <end position="353"/>
    </location>
</feature>
<feature type="domain" description="FPL" evidence="1">
    <location>
        <begin position="50"/>
        <end position="199"/>
    </location>
</feature>
<feature type="region of interest" description="Disordered" evidence="2">
    <location>
        <begin position="409"/>
        <end position="434"/>
    </location>
</feature>
<feature type="region of interest" description="Disordered" evidence="2">
    <location>
        <begin position="837"/>
        <end position="861"/>
    </location>
</feature>
<feature type="region of interest" description="Disordered" evidence="2">
    <location>
        <begin position="876"/>
        <end position="993"/>
    </location>
</feature>
<feature type="region of interest" description="Disordered" evidence="2">
    <location>
        <begin position="1037"/>
        <end position="1067"/>
    </location>
</feature>
<feature type="compositionally biased region" description="Low complexity" evidence="2">
    <location>
        <begin position="409"/>
        <end position="418"/>
    </location>
</feature>
<feature type="compositionally biased region" description="Polar residues" evidence="2">
    <location>
        <begin position="421"/>
        <end position="432"/>
    </location>
</feature>
<feature type="compositionally biased region" description="Polar residues" evidence="2">
    <location>
        <begin position="876"/>
        <end position="888"/>
    </location>
</feature>
<feature type="compositionally biased region" description="Basic and acidic residues" evidence="2">
    <location>
        <begin position="917"/>
        <end position="926"/>
    </location>
</feature>
<feature type="compositionally biased region" description="Low complexity" evidence="2">
    <location>
        <begin position="927"/>
        <end position="947"/>
    </location>
</feature>
<feature type="compositionally biased region" description="Basic and acidic residues" evidence="2">
    <location>
        <begin position="951"/>
        <end position="974"/>
    </location>
</feature>
<feature type="compositionally biased region" description="Polar residues" evidence="2">
    <location>
        <begin position="975"/>
        <end position="993"/>
    </location>
</feature>
<feature type="compositionally biased region" description="Basic and acidic residues" evidence="2">
    <location>
        <begin position="1057"/>
        <end position="1067"/>
    </location>
</feature>
<feature type="splice variant" id="VSP_059009" description="In isoform B." evidence="6">
    <location>
        <begin position="895"/>
        <end position="963"/>
    </location>
</feature>
<feature type="sequence conflict" description="In Ref. 3; AAM51979." evidence="6" ref="3">
    <original>S</original>
    <variation>P</variation>
    <location>
        <position position="541"/>
    </location>
</feature>
<name>CL16A_DROME</name>
<dbReference type="EMBL" id="AE014297">
    <property type="protein sequence ID" value="AAF55313.2"/>
    <property type="molecule type" value="Genomic_DNA"/>
</dbReference>
<dbReference type="EMBL" id="AE014297">
    <property type="protein sequence ID" value="ABC66179.1"/>
    <property type="molecule type" value="Genomic_DNA"/>
</dbReference>
<dbReference type="EMBL" id="AY121652">
    <property type="protein sequence ID" value="AAM51979.1"/>
    <property type="status" value="ALT_FRAME"/>
    <property type="molecule type" value="mRNA"/>
</dbReference>
<dbReference type="EMBL" id="BT021249">
    <property type="protein sequence ID" value="AAX33397.1"/>
    <property type="molecule type" value="mRNA"/>
</dbReference>
<dbReference type="RefSeq" id="NP_001034058.1">
    <molecule id="Q9VEV4-2"/>
    <property type="nucleotide sequence ID" value="NM_001038969.2"/>
</dbReference>
<dbReference type="RefSeq" id="NP_650542.1">
    <molecule id="Q9VEV4-1"/>
    <property type="nucleotide sequence ID" value="NM_142285.2"/>
</dbReference>
<dbReference type="SMR" id="Q9VEV4"/>
<dbReference type="FunCoup" id="Q9VEV4">
    <property type="interactions" value="1785"/>
</dbReference>
<dbReference type="IntAct" id="Q9VEV4">
    <property type="interactions" value="1"/>
</dbReference>
<dbReference type="STRING" id="7227.FBpp0082766"/>
<dbReference type="PaxDb" id="7227-FBpp0082766"/>
<dbReference type="EnsemblMetazoa" id="FBtr0083315">
    <molecule id="Q9VEV4-1"/>
    <property type="protein sequence ID" value="FBpp0082766"/>
    <property type="gene ID" value="FBgn0038427"/>
</dbReference>
<dbReference type="EnsemblMetazoa" id="FBtr0100643">
    <molecule id="Q9VEV4-2"/>
    <property type="protein sequence ID" value="FBpp0100104"/>
    <property type="gene ID" value="FBgn0038427"/>
</dbReference>
<dbReference type="GeneID" id="41992"/>
<dbReference type="KEGG" id="dme:Dmel_CG12753"/>
<dbReference type="UCSC" id="CG12753-RA">
    <molecule id="Q9VEV4-1"/>
    <property type="organism name" value="d. melanogaster"/>
</dbReference>
<dbReference type="UCSC" id="CG12753-RB">
    <property type="organism name" value="d. melanogaster"/>
</dbReference>
<dbReference type="AGR" id="FB:FBgn0038427"/>
<dbReference type="CTD" id="107924"/>
<dbReference type="FlyBase" id="FBgn0038427">
    <property type="gene designation" value="ema"/>
</dbReference>
<dbReference type="VEuPathDB" id="VectorBase:FBgn0038427"/>
<dbReference type="eggNOG" id="KOG2219">
    <property type="taxonomic scope" value="Eukaryota"/>
</dbReference>
<dbReference type="GeneTree" id="ENSGT00390000013826"/>
<dbReference type="InParanoid" id="Q9VEV4"/>
<dbReference type="OMA" id="SMQEQNT"/>
<dbReference type="OrthoDB" id="294052at2759"/>
<dbReference type="PhylomeDB" id="Q9VEV4"/>
<dbReference type="BioGRID-ORCS" id="41992">
    <property type="hits" value="0 hits in 1 CRISPR screen"/>
</dbReference>
<dbReference type="ChiTaRS" id="heph">
    <property type="organism name" value="fly"/>
</dbReference>
<dbReference type="GenomeRNAi" id="41992"/>
<dbReference type="PRO" id="PR:Q9VEV4"/>
<dbReference type="Proteomes" id="UP000000803">
    <property type="component" value="Chromosome 3R"/>
</dbReference>
<dbReference type="Bgee" id="FBgn0038427">
    <property type="expression patterns" value="Expressed in outer photoreceptor cell (Drosophila) in insect head and 90 other cell types or tissues"/>
</dbReference>
<dbReference type="ExpressionAtlas" id="Q9VEV4">
    <property type="expression patterns" value="baseline and differential"/>
</dbReference>
<dbReference type="GO" id="GO:0000421">
    <property type="term" value="C:autophagosome membrane"/>
    <property type="evidence" value="ECO:0007669"/>
    <property type="project" value="UniProtKB-SubCell"/>
</dbReference>
<dbReference type="GO" id="GO:0005794">
    <property type="term" value="C:Golgi apparatus"/>
    <property type="evidence" value="ECO:0000314"/>
    <property type="project" value="FlyBase"/>
</dbReference>
<dbReference type="GO" id="GO:0000139">
    <property type="term" value="C:Golgi membrane"/>
    <property type="evidence" value="ECO:0007669"/>
    <property type="project" value="UniProtKB-SubCell"/>
</dbReference>
<dbReference type="GO" id="GO:0005770">
    <property type="term" value="C:late endosome"/>
    <property type="evidence" value="ECO:0000314"/>
    <property type="project" value="FlyBase"/>
</dbReference>
<dbReference type="GO" id="GO:0031902">
    <property type="term" value="C:late endosome membrane"/>
    <property type="evidence" value="ECO:0007669"/>
    <property type="project" value="UniProtKB-SubCell"/>
</dbReference>
<dbReference type="GO" id="GO:0016020">
    <property type="term" value="C:membrane"/>
    <property type="evidence" value="ECO:0000314"/>
    <property type="project" value="FlyBase"/>
</dbReference>
<dbReference type="GO" id="GO:0031267">
    <property type="term" value="F:small GTPase binding"/>
    <property type="evidence" value="ECO:0000353"/>
    <property type="project" value="FlyBase"/>
</dbReference>
<dbReference type="GO" id="GO:0006914">
    <property type="term" value="P:autophagy"/>
    <property type="evidence" value="ECO:0007669"/>
    <property type="project" value="UniProtKB-KW"/>
</dbReference>
<dbReference type="GO" id="GO:0016197">
    <property type="term" value="P:endosomal transport"/>
    <property type="evidence" value="ECO:0000316"/>
    <property type="project" value="FlyBase"/>
</dbReference>
<dbReference type="GO" id="GO:0008333">
    <property type="term" value="P:endosome to lysosome transport"/>
    <property type="evidence" value="ECO:0000315"/>
    <property type="project" value="FlyBase"/>
</dbReference>
<dbReference type="GO" id="GO:1901096">
    <property type="term" value="P:regulation of autophagosome maturation"/>
    <property type="evidence" value="ECO:0000318"/>
    <property type="project" value="GO_Central"/>
</dbReference>
<dbReference type="GO" id="GO:0007034">
    <property type="term" value="P:vacuolar transport"/>
    <property type="evidence" value="ECO:0000318"/>
    <property type="project" value="GO_Central"/>
</dbReference>
<dbReference type="InterPro" id="IPR039272">
    <property type="entry name" value="CLEC16A/TT9"/>
</dbReference>
<dbReference type="InterPro" id="IPR045820">
    <property type="entry name" value="CLEC16A/TT9_C"/>
</dbReference>
<dbReference type="InterPro" id="IPR019155">
    <property type="entry name" value="CLEC16A/TT9_N"/>
</dbReference>
<dbReference type="PANTHER" id="PTHR21481">
    <property type="entry name" value="PROTEIN CLEC16A"/>
    <property type="match status" value="1"/>
</dbReference>
<dbReference type="PANTHER" id="PTHR21481:SF0">
    <property type="entry name" value="PROTEIN CLEC16A"/>
    <property type="match status" value="1"/>
</dbReference>
<dbReference type="Pfam" id="PF19439">
    <property type="entry name" value="CLEC16A_C"/>
    <property type="match status" value="2"/>
</dbReference>
<dbReference type="Pfam" id="PF09758">
    <property type="entry name" value="FPL"/>
    <property type="match status" value="1"/>
</dbReference>
<evidence type="ECO:0000255" key="1"/>
<evidence type="ECO:0000256" key="2">
    <source>
        <dbReference type="SAM" id="MobiDB-lite"/>
    </source>
</evidence>
<evidence type="ECO:0000269" key="3">
    <source>
    </source>
</evidence>
<evidence type="ECO:0000269" key="4">
    <source>
    </source>
</evidence>
<evidence type="ECO:0000303" key="5">
    <source>
    </source>
</evidence>
<evidence type="ECO:0000305" key="6"/>
<evidence type="ECO:0000312" key="7">
    <source>
        <dbReference type="EMBL" id="AAM51979.1"/>
    </source>
</evidence>
<evidence type="ECO:0000312" key="8">
    <source>
        <dbReference type="EMBL" id="AAX33397.1"/>
    </source>
</evidence>
<evidence type="ECO:0000312" key="9">
    <source>
        <dbReference type="FlyBase" id="FBgn0038427"/>
    </source>
</evidence>
<evidence type="ECO:0000312" key="10">
    <source>
        <dbReference type="Proteomes" id="UP000000803"/>
    </source>
</evidence>
<gene>
    <name evidence="9" type="primary">ema</name>
    <name evidence="9" type="ORF">CG12753</name>
</gene>
<sequence length="1067" mass="119367">MFRSRSWFGGPWGGRPKNRLSLEHLKYLYSILEKNTTVSESNRGLLVESLRCIAEILIWGDQHDSLVFDFFLEKNMLSYFLHIMRQKSGGSSFVCVQLLQTLNILFENIRNETSLYYLLSNNHVNSIMVHKFDFSDEDVMGYYILFLKTLSLKLNTHTIHFFYNEHTNDFPLYTEAIKFFNHPESMVRIAVRTISLNVYKVQNPSMLRFIRDKTAAPYFSNLVWFIGKHILELDTCVRTDIDHQSNQKLSNLVAEHLDHLHYLSDILLLEIKDLNAVLTEHLLHKLFVPLYIFSLTPAPPPPSLAVVTQNLAAVLNRNVDIDIQEMHNPRVSSIVALFLLSLVFLVVSHAPLVHALAWVILNGDHSVFKEGAAEILNSYVEHREVVVPGFGEPDESLEQALDTVTGQSSSSSYALSEDSGVESSSPATTELDSQADAVEAEQIKLRNITDEEKQLLQKSSSSTKADFAEMAKPFLDTVLHALDCTENDYLALLSLCLIYAMSHNRGIKNEWFEQVLAKSTRGAFSYKTALIEHLLNIITQSSQPSSRIRLITVEIALELLVTFTRPSSDDSRCITAAQQDLLFSARNQSMVVIRNFYKSEDIFLDLFEDEYNEMRKAQLNVEFLCMDSTILLPPTGTPLTGINFTRRLPCGEVEKARRAIRVYFLLRRTCQKFLNEKESLLPLTNVVNLVQVENVLDLNNSDLIACTVVAKDSSKQRRFLVIDALQLILVEPDAKLLGWGVAKFVGFLQDVEVQGDKDDSRCLHITVHRGGVTHNRTPLLSAKFLFDDHIRCMAAKQRLTKGRSKARQKKMYQIAQLIEIPGQMDSPVYAVGGTMVASSSGGSGNSSGSSSRSSHHRPMFSTANRVPGFAAVLRGSNSAGVSRTQMAPNRSIEGIRNESAGRSRRRSPSSTSGSNLRADHSDRERSPSVSMGSHSSSQSRENSQPRSTGNRSRESSPRMPRPRSEEIPLEDFQHSRNNSPHSRGNPSPASRSHTPIRVLHYDQLSGHSGSPREASLGGTNALLSQLNGLNREVLPTQSSEETSFIGSDGNEATGGSEGRRRGAIETV</sequence>
<organism evidence="10">
    <name type="scientific">Drosophila melanogaster</name>
    <name type="common">Fruit fly</name>
    <dbReference type="NCBI Taxonomy" id="7227"/>
    <lineage>
        <taxon>Eukaryota</taxon>
        <taxon>Metazoa</taxon>
        <taxon>Ecdysozoa</taxon>
        <taxon>Arthropoda</taxon>
        <taxon>Hexapoda</taxon>
        <taxon>Insecta</taxon>
        <taxon>Pterygota</taxon>
        <taxon>Neoptera</taxon>
        <taxon>Endopterygota</taxon>
        <taxon>Diptera</taxon>
        <taxon>Brachycera</taxon>
        <taxon>Muscomorpha</taxon>
        <taxon>Ephydroidea</taxon>
        <taxon>Drosophilidae</taxon>
        <taxon>Drosophila</taxon>
        <taxon>Sophophora</taxon>
    </lineage>
</organism>
<comment type="function">
    <text evidence="3 4">Required for mitophagy, autophagy and endosome maturation, possibly by acting in multiple membrane trafficking pathways (PubMed:20194640, PubMed:22493244). Required for endosome trafficking and maturation (PubMed:20194640). Functions with the class C Vps-HOPS complex member Vps16a to promote endosomal maturation into degradative late endosomes and lysosomes (PubMed:20194640). In response to starvation, functions at an early stage of autophagy to promote autophagosome growth and efficient autophagy (PubMed:22493244). Essential for the recruitment of lva-positive Golgi elements to autophagosomes (PubMed:22493244). Likely to function by promoting membrane traffic from the Golgi complex to the developing autophagosomes (PubMed:22493244). Also regulates synaptic growth at the neuromuscular junctions (NMJ) by down-regulating BMP signaling (PubMed:20194640).</text>
</comment>
<comment type="subunit">
    <text evidence="3">Interacts with the class C Vps-HOPS complex components; Car, Dor and Vps16a.</text>
</comment>
<comment type="subcellular location">
    <subcellularLocation>
        <location evidence="4">Cytoplasmic vesicle</location>
        <location evidence="4">Autophagosome membrane</location>
        <topology evidence="1">Single-pass membrane protein</topology>
    </subcellularLocation>
    <subcellularLocation>
        <location evidence="3">Late endosome membrane</location>
        <topology evidence="3">Single-pass membrane protein</topology>
    </subcellularLocation>
    <subcellularLocation>
        <location evidence="4">Golgi apparatus membrane</location>
        <topology evidence="1">Single-pass membrane protein</topology>
    </subcellularLocation>
    <text evidence="4">Under normal conditions detected in small punctate structures throughout the cytosol of fat body cells, upon induction of autophagy by starvation becomes localized to the outer membrane surface of autophagosomes. Not detected in the Golgi of Garland cells.</text>
</comment>
<comment type="alternative products">
    <event type="alternative splicing"/>
    <isoform>
        <id>Q9VEV4-1</id>
        <name evidence="9">A</name>
        <sequence type="displayed"/>
    </isoform>
    <isoform>
        <id>Q9VEV4-2</id>
        <name evidence="9">B</name>
        <sequence type="described" ref="VSP_059009"/>
    </isoform>
</comment>
<comment type="disruption phenotype">
    <text evidence="3 4">Pupal lethal (PubMed:20194640). Larval neuromuscular junctions (NMJ) display an increase in synaptic bouton number and synaptic area (PubMed:20194640). In Garland cells endosome trafficking is impaired (PubMed:20194640). Early and late endosomes are unable to progress into mature degradative endosomes and lysosomes resulting in enlarged endosomal compartments (PubMed:20194640). In larvae, starvation-induced autophagosomes are significantly decreased in size (PubMed:22493244). However, autophagosomes are able to form and can mature via fusion with endosomes and lysosomes (PubMed:22493244).</text>
</comment>
<comment type="similarity">
    <text evidence="6">Belongs to the CLEC16A/gop-1 family.</text>
</comment>
<comment type="sequence caution" evidence="6">
    <conflict type="frameshift">
        <sequence resource="EMBL-CDS" id="AAM51979"/>
    </conflict>
</comment>
<accession>Q9VEV4</accession>
<accession>Q5BIH5</accession>
<accession>Q8MRD4</accession>
<protein>
    <recommendedName>
        <fullName evidence="6">Protein CLEC16A homolog</fullName>
    </recommendedName>
    <alternativeName>
        <fullName evidence="5">Endosomal maturation defective protein</fullName>
    </alternativeName>
</protein>
<reference evidence="10" key="1">
    <citation type="journal article" date="2000" name="Science">
        <title>The genome sequence of Drosophila melanogaster.</title>
        <authorList>
            <person name="Adams M.D."/>
            <person name="Celniker S.E."/>
            <person name="Holt R.A."/>
            <person name="Evans C.A."/>
            <person name="Gocayne J.D."/>
            <person name="Amanatides P.G."/>
            <person name="Scherer S.E."/>
            <person name="Li P.W."/>
            <person name="Hoskins R.A."/>
            <person name="Galle R.F."/>
            <person name="George R.A."/>
            <person name="Lewis S.E."/>
            <person name="Richards S."/>
            <person name="Ashburner M."/>
            <person name="Henderson S.N."/>
            <person name="Sutton G.G."/>
            <person name="Wortman J.R."/>
            <person name="Yandell M.D."/>
            <person name="Zhang Q."/>
            <person name="Chen L.X."/>
            <person name="Brandon R.C."/>
            <person name="Rogers Y.-H.C."/>
            <person name="Blazej R.G."/>
            <person name="Champe M."/>
            <person name="Pfeiffer B.D."/>
            <person name="Wan K.H."/>
            <person name="Doyle C."/>
            <person name="Baxter E.G."/>
            <person name="Helt G."/>
            <person name="Nelson C.R."/>
            <person name="Miklos G.L.G."/>
            <person name="Abril J.F."/>
            <person name="Agbayani A."/>
            <person name="An H.-J."/>
            <person name="Andrews-Pfannkoch C."/>
            <person name="Baldwin D."/>
            <person name="Ballew R.M."/>
            <person name="Basu A."/>
            <person name="Baxendale J."/>
            <person name="Bayraktaroglu L."/>
            <person name="Beasley E.M."/>
            <person name="Beeson K.Y."/>
            <person name="Benos P.V."/>
            <person name="Berman B.P."/>
            <person name="Bhandari D."/>
            <person name="Bolshakov S."/>
            <person name="Borkova D."/>
            <person name="Botchan M.R."/>
            <person name="Bouck J."/>
            <person name="Brokstein P."/>
            <person name="Brottier P."/>
            <person name="Burtis K.C."/>
            <person name="Busam D.A."/>
            <person name="Butler H."/>
            <person name="Cadieu E."/>
            <person name="Center A."/>
            <person name="Chandra I."/>
            <person name="Cherry J.M."/>
            <person name="Cawley S."/>
            <person name="Dahlke C."/>
            <person name="Davenport L.B."/>
            <person name="Davies P."/>
            <person name="de Pablos B."/>
            <person name="Delcher A."/>
            <person name="Deng Z."/>
            <person name="Mays A.D."/>
            <person name="Dew I."/>
            <person name="Dietz S.M."/>
            <person name="Dodson K."/>
            <person name="Doup L.E."/>
            <person name="Downes M."/>
            <person name="Dugan-Rocha S."/>
            <person name="Dunkov B.C."/>
            <person name="Dunn P."/>
            <person name="Durbin K.J."/>
            <person name="Evangelista C.C."/>
            <person name="Ferraz C."/>
            <person name="Ferriera S."/>
            <person name="Fleischmann W."/>
            <person name="Fosler C."/>
            <person name="Gabrielian A.E."/>
            <person name="Garg N.S."/>
            <person name="Gelbart W.M."/>
            <person name="Glasser K."/>
            <person name="Glodek A."/>
            <person name="Gong F."/>
            <person name="Gorrell J.H."/>
            <person name="Gu Z."/>
            <person name="Guan P."/>
            <person name="Harris M."/>
            <person name="Harris N.L."/>
            <person name="Harvey D.A."/>
            <person name="Heiman T.J."/>
            <person name="Hernandez J.R."/>
            <person name="Houck J."/>
            <person name="Hostin D."/>
            <person name="Houston K.A."/>
            <person name="Howland T.J."/>
            <person name="Wei M.-H."/>
            <person name="Ibegwam C."/>
            <person name="Jalali M."/>
            <person name="Kalush F."/>
            <person name="Karpen G.H."/>
            <person name="Ke Z."/>
            <person name="Kennison J.A."/>
            <person name="Ketchum K.A."/>
            <person name="Kimmel B.E."/>
            <person name="Kodira C.D."/>
            <person name="Kraft C.L."/>
            <person name="Kravitz S."/>
            <person name="Kulp D."/>
            <person name="Lai Z."/>
            <person name="Lasko P."/>
            <person name="Lei Y."/>
            <person name="Levitsky A.A."/>
            <person name="Li J.H."/>
            <person name="Li Z."/>
            <person name="Liang Y."/>
            <person name="Lin X."/>
            <person name="Liu X."/>
            <person name="Mattei B."/>
            <person name="McIntosh T.C."/>
            <person name="McLeod M.P."/>
            <person name="McPherson D."/>
            <person name="Merkulov G."/>
            <person name="Milshina N.V."/>
            <person name="Mobarry C."/>
            <person name="Morris J."/>
            <person name="Moshrefi A."/>
            <person name="Mount S.M."/>
            <person name="Moy M."/>
            <person name="Murphy B."/>
            <person name="Murphy L."/>
            <person name="Muzny D.M."/>
            <person name="Nelson D.L."/>
            <person name="Nelson D.R."/>
            <person name="Nelson K.A."/>
            <person name="Nixon K."/>
            <person name="Nusskern D.R."/>
            <person name="Pacleb J.M."/>
            <person name="Palazzolo M."/>
            <person name="Pittman G.S."/>
            <person name="Pan S."/>
            <person name="Pollard J."/>
            <person name="Puri V."/>
            <person name="Reese M.G."/>
            <person name="Reinert K."/>
            <person name="Remington K."/>
            <person name="Saunders R.D.C."/>
            <person name="Scheeler F."/>
            <person name="Shen H."/>
            <person name="Shue B.C."/>
            <person name="Siden-Kiamos I."/>
            <person name="Simpson M."/>
            <person name="Skupski M.P."/>
            <person name="Smith T.J."/>
            <person name="Spier E."/>
            <person name="Spradling A.C."/>
            <person name="Stapleton M."/>
            <person name="Strong R."/>
            <person name="Sun E."/>
            <person name="Svirskas R."/>
            <person name="Tector C."/>
            <person name="Turner R."/>
            <person name="Venter E."/>
            <person name="Wang A.H."/>
            <person name="Wang X."/>
            <person name="Wang Z.-Y."/>
            <person name="Wassarman D.A."/>
            <person name="Weinstock G.M."/>
            <person name="Weissenbach J."/>
            <person name="Williams S.M."/>
            <person name="Woodage T."/>
            <person name="Worley K.C."/>
            <person name="Wu D."/>
            <person name="Yang S."/>
            <person name="Yao Q.A."/>
            <person name="Ye J."/>
            <person name="Yeh R.-F."/>
            <person name="Zaveri J.S."/>
            <person name="Zhan M."/>
            <person name="Zhang G."/>
            <person name="Zhao Q."/>
            <person name="Zheng L."/>
            <person name="Zheng X.H."/>
            <person name="Zhong F.N."/>
            <person name="Zhong W."/>
            <person name="Zhou X."/>
            <person name="Zhu S.C."/>
            <person name="Zhu X."/>
            <person name="Smith H.O."/>
            <person name="Gibbs R.A."/>
            <person name="Myers E.W."/>
            <person name="Rubin G.M."/>
            <person name="Venter J.C."/>
        </authorList>
    </citation>
    <scope>NUCLEOTIDE SEQUENCE [LARGE SCALE GENOMIC DNA]</scope>
    <source>
        <strain evidence="10">Berkeley</strain>
    </source>
</reference>
<reference evidence="10" key="2">
    <citation type="journal article" date="2002" name="Genome Biol.">
        <title>Annotation of the Drosophila melanogaster euchromatic genome: a systematic review.</title>
        <authorList>
            <person name="Misra S."/>
            <person name="Crosby M.A."/>
            <person name="Mungall C.J."/>
            <person name="Matthews B.B."/>
            <person name="Campbell K.S."/>
            <person name="Hradecky P."/>
            <person name="Huang Y."/>
            <person name="Kaminker J.S."/>
            <person name="Millburn G.H."/>
            <person name="Prochnik S.E."/>
            <person name="Smith C.D."/>
            <person name="Tupy J.L."/>
            <person name="Whitfield E.J."/>
            <person name="Bayraktaroglu L."/>
            <person name="Berman B.P."/>
            <person name="Bettencourt B.R."/>
            <person name="Celniker S.E."/>
            <person name="de Grey A.D.N.J."/>
            <person name="Drysdale R.A."/>
            <person name="Harris N.L."/>
            <person name="Richter J."/>
            <person name="Russo S."/>
            <person name="Schroeder A.J."/>
            <person name="Shu S.Q."/>
            <person name="Stapleton M."/>
            <person name="Yamada C."/>
            <person name="Ashburner M."/>
            <person name="Gelbart W.M."/>
            <person name="Rubin G.M."/>
            <person name="Lewis S.E."/>
        </authorList>
    </citation>
    <scope>GENOME REANNOTATION</scope>
    <source>
        <strain evidence="10">Berkeley</strain>
    </source>
</reference>
<reference evidence="7" key="3">
    <citation type="journal article" date="2002" name="Genome Biol.">
        <title>A Drosophila full-length cDNA resource.</title>
        <authorList>
            <person name="Stapleton M."/>
            <person name="Carlson J.W."/>
            <person name="Brokstein P."/>
            <person name="Yu C."/>
            <person name="Champe M."/>
            <person name="George R.A."/>
            <person name="Guarin H."/>
            <person name="Kronmiller B."/>
            <person name="Pacleb J.M."/>
            <person name="Park S."/>
            <person name="Wan K.H."/>
            <person name="Rubin G.M."/>
            <person name="Celniker S.E."/>
        </authorList>
    </citation>
    <scope>NUCLEOTIDE SEQUENCE [LARGE SCALE MRNA] (ISOFORM A)</scope>
    <source>
        <strain evidence="7">Berkeley</strain>
        <tissue evidence="7">Embryo</tissue>
    </source>
</reference>
<reference evidence="8" key="4">
    <citation type="submission" date="2005-03" db="EMBL/GenBank/DDBJ databases">
        <authorList>
            <person name="Stapleton M."/>
            <person name="Carlson J."/>
            <person name="Chavez C."/>
            <person name="Frise E."/>
            <person name="George R."/>
            <person name="Pacleb J."/>
            <person name="Park S."/>
            <person name="Wan K."/>
            <person name="Yu C."/>
            <person name="Rubin G.M."/>
            <person name="Celniker S."/>
        </authorList>
    </citation>
    <scope>NUCLEOTIDE SEQUENCE [LARGE SCALE MRNA] (ISOFORM B)</scope>
    <source>
        <strain evidence="8">Berkeley</strain>
        <tissue evidence="8">Embryo</tissue>
    </source>
</reference>
<reference evidence="6" key="5">
    <citation type="journal article" date="2010" name="J. Cell Biol.">
        <title>The novel endosomal membrane protein Ema interacts with the class C Vps-HOPS complex to promote endosomal maturation.</title>
        <authorList>
            <person name="Kim S."/>
            <person name="Wairkar Y.P."/>
            <person name="Daniels R.W."/>
            <person name="DiAntonio A."/>
        </authorList>
    </citation>
    <scope>FUNCTION</scope>
    <scope>INTERACTION WITH CAR; DOR AND VPS16A</scope>
    <scope>SUBCELLULAR LOCATION</scope>
    <scope>DISRUPTION PHENOTYPE</scope>
</reference>
<reference evidence="6" key="6">
    <citation type="journal article" date="2012" name="Proc. Natl. Acad. Sci. U.S.A.">
        <title>Drosophila Golgi membrane protein Ema promotes autophagosomal growth and function.</title>
        <authorList>
            <person name="Kim S."/>
            <person name="Naylor S.A."/>
            <person name="DiAntonio A."/>
        </authorList>
    </citation>
    <scope>FUNCTION</scope>
    <scope>SUBCELLULAR LOCATION</scope>
    <scope>DISRUPTION PHENOTYPE</scope>
</reference>
<keyword id="KW-0025">Alternative splicing</keyword>
<keyword id="KW-0072">Autophagy</keyword>
<keyword id="KW-0968">Cytoplasmic vesicle</keyword>
<keyword id="KW-0967">Endosome</keyword>
<keyword id="KW-0333">Golgi apparatus</keyword>
<keyword id="KW-0472">Membrane</keyword>
<keyword id="KW-1185">Reference proteome</keyword>
<keyword id="KW-0812">Transmembrane</keyword>
<keyword id="KW-1133">Transmembrane helix</keyword>
<proteinExistence type="evidence at protein level"/>